<reference key="1">
    <citation type="journal article" date="2006" name="Nat. Biotechnol.">
        <title>Genome sequence of the bioplastic-producing 'Knallgas' bacterium Ralstonia eutropha H16.</title>
        <authorList>
            <person name="Pohlmann A."/>
            <person name="Fricke W.F."/>
            <person name="Reinecke F."/>
            <person name="Kusian B."/>
            <person name="Liesegang H."/>
            <person name="Cramm R."/>
            <person name="Eitinger T."/>
            <person name="Ewering C."/>
            <person name="Poetter M."/>
            <person name="Schwartz E."/>
            <person name="Strittmatter A."/>
            <person name="Voss I."/>
            <person name="Gottschalk G."/>
            <person name="Steinbuechel A."/>
            <person name="Friedrich B."/>
            <person name="Bowien B."/>
        </authorList>
    </citation>
    <scope>NUCLEOTIDE SEQUENCE [LARGE SCALE GENOMIC DNA]</scope>
    <source>
        <strain>ATCC 17699 / DSM 428 / KCTC 22496 / NCIMB 10442 / H16 / Stanier 337</strain>
    </source>
</reference>
<comment type="function">
    <text evidence="1">Catalyzes the ATP-dependent 2-thiolation of cytidine in position 32 of tRNA, to form 2-thiocytidine (s(2)C32). The sulfur atoms are provided by the cysteine/cysteine desulfurase (IscS) system.</text>
</comment>
<comment type="catalytic activity">
    <reaction evidence="1">
        <text>cytidine(32) in tRNA + S-sulfanyl-L-cysteinyl-[cysteine desulfurase] + AH2 + ATP = 2-thiocytidine(32) in tRNA + L-cysteinyl-[cysteine desulfurase] + A + AMP + diphosphate + H(+)</text>
        <dbReference type="Rhea" id="RHEA:57048"/>
        <dbReference type="Rhea" id="RHEA-COMP:10288"/>
        <dbReference type="Rhea" id="RHEA-COMP:12157"/>
        <dbReference type="Rhea" id="RHEA-COMP:12158"/>
        <dbReference type="Rhea" id="RHEA-COMP:14821"/>
        <dbReference type="ChEBI" id="CHEBI:13193"/>
        <dbReference type="ChEBI" id="CHEBI:15378"/>
        <dbReference type="ChEBI" id="CHEBI:17499"/>
        <dbReference type="ChEBI" id="CHEBI:29950"/>
        <dbReference type="ChEBI" id="CHEBI:30616"/>
        <dbReference type="ChEBI" id="CHEBI:33019"/>
        <dbReference type="ChEBI" id="CHEBI:61963"/>
        <dbReference type="ChEBI" id="CHEBI:82748"/>
        <dbReference type="ChEBI" id="CHEBI:141453"/>
        <dbReference type="ChEBI" id="CHEBI:456215"/>
    </reaction>
    <physiologicalReaction direction="left-to-right" evidence="1">
        <dbReference type="Rhea" id="RHEA:57049"/>
    </physiologicalReaction>
</comment>
<comment type="cofactor">
    <cofactor evidence="1">
        <name>Mg(2+)</name>
        <dbReference type="ChEBI" id="CHEBI:18420"/>
    </cofactor>
</comment>
<comment type="cofactor">
    <cofactor evidence="1">
        <name>[4Fe-4S] cluster</name>
        <dbReference type="ChEBI" id="CHEBI:49883"/>
    </cofactor>
    <text evidence="1">Binds 1 [4Fe-4S] cluster per subunit. The cluster is chelated by three Cys residues, the fourth Fe has a free coordination site that may bind a sulfur atom transferred from the persulfide of IscS.</text>
</comment>
<comment type="pathway">
    <text evidence="1">tRNA modification.</text>
</comment>
<comment type="subunit">
    <text evidence="1">Homodimer.</text>
</comment>
<comment type="subcellular location">
    <subcellularLocation>
        <location evidence="1">Cytoplasm</location>
    </subcellularLocation>
</comment>
<comment type="miscellaneous">
    <text evidence="1">The thiolation reaction likely consists of two steps: a first activation step by ATP to form an adenylated intermediate of the target base of tRNA, and a second nucleophilic substitution step of the sulfur (S) atom supplied by the hydrosulfide attached to the Fe-S cluster.</text>
</comment>
<comment type="similarity">
    <text evidence="1">Belongs to the TtcA family.</text>
</comment>
<dbReference type="EC" id="2.8.1.-" evidence="1"/>
<dbReference type="EMBL" id="AM260479">
    <property type="protein sequence ID" value="CAJ91412.1"/>
    <property type="molecule type" value="Genomic_DNA"/>
</dbReference>
<dbReference type="RefSeq" id="WP_011614434.1">
    <property type="nucleotide sequence ID" value="NC_008313.1"/>
</dbReference>
<dbReference type="SMR" id="Q0KF09"/>
<dbReference type="STRING" id="381666.H16_A0260"/>
<dbReference type="KEGG" id="reh:H16_A0260"/>
<dbReference type="PATRIC" id="fig|381666.6.peg.620"/>
<dbReference type="eggNOG" id="COG0037">
    <property type="taxonomic scope" value="Bacteria"/>
</dbReference>
<dbReference type="HOGENOM" id="CLU_026481_0_0_4"/>
<dbReference type="OrthoDB" id="9801054at2"/>
<dbReference type="Proteomes" id="UP000008210">
    <property type="component" value="Chromosome 1"/>
</dbReference>
<dbReference type="GO" id="GO:0005737">
    <property type="term" value="C:cytoplasm"/>
    <property type="evidence" value="ECO:0007669"/>
    <property type="project" value="UniProtKB-SubCell"/>
</dbReference>
<dbReference type="GO" id="GO:0051539">
    <property type="term" value="F:4 iron, 4 sulfur cluster binding"/>
    <property type="evidence" value="ECO:0007669"/>
    <property type="project" value="UniProtKB-UniRule"/>
</dbReference>
<dbReference type="GO" id="GO:0005524">
    <property type="term" value="F:ATP binding"/>
    <property type="evidence" value="ECO:0007669"/>
    <property type="project" value="UniProtKB-UniRule"/>
</dbReference>
<dbReference type="GO" id="GO:0000287">
    <property type="term" value="F:magnesium ion binding"/>
    <property type="evidence" value="ECO:0007669"/>
    <property type="project" value="UniProtKB-UniRule"/>
</dbReference>
<dbReference type="GO" id="GO:0016783">
    <property type="term" value="F:sulfurtransferase activity"/>
    <property type="evidence" value="ECO:0007669"/>
    <property type="project" value="UniProtKB-UniRule"/>
</dbReference>
<dbReference type="GO" id="GO:0000049">
    <property type="term" value="F:tRNA binding"/>
    <property type="evidence" value="ECO:0007669"/>
    <property type="project" value="UniProtKB-KW"/>
</dbReference>
<dbReference type="GO" id="GO:0034227">
    <property type="term" value="P:tRNA thio-modification"/>
    <property type="evidence" value="ECO:0007669"/>
    <property type="project" value="UniProtKB-UniRule"/>
</dbReference>
<dbReference type="CDD" id="cd24138">
    <property type="entry name" value="TtcA-like"/>
    <property type="match status" value="1"/>
</dbReference>
<dbReference type="Gene3D" id="3.40.50.620">
    <property type="entry name" value="HUPs"/>
    <property type="match status" value="1"/>
</dbReference>
<dbReference type="HAMAP" id="MF_01850">
    <property type="entry name" value="TtcA"/>
    <property type="match status" value="1"/>
</dbReference>
<dbReference type="InterPro" id="IPR014729">
    <property type="entry name" value="Rossmann-like_a/b/a_fold"/>
</dbReference>
<dbReference type="InterPro" id="IPR011063">
    <property type="entry name" value="TilS/TtcA_N"/>
</dbReference>
<dbReference type="InterPro" id="IPR012089">
    <property type="entry name" value="tRNA_Cyd_32_2_STrfase"/>
</dbReference>
<dbReference type="NCBIfam" id="NF007972">
    <property type="entry name" value="PRK10696.1"/>
    <property type="match status" value="1"/>
</dbReference>
<dbReference type="PANTHER" id="PTHR43686:SF1">
    <property type="entry name" value="AMINOTRAN_5 DOMAIN-CONTAINING PROTEIN"/>
    <property type="match status" value="1"/>
</dbReference>
<dbReference type="PANTHER" id="PTHR43686">
    <property type="entry name" value="SULFURTRANSFERASE-RELATED"/>
    <property type="match status" value="1"/>
</dbReference>
<dbReference type="Pfam" id="PF01171">
    <property type="entry name" value="ATP_bind_3"/>
    <property type="match status" value="1"/>
</dbReference>
<dbReference type="SUPFAM" id="SSF52402">
    <property type="entry name" value="Adenine nucleotide alpha hydrolases-like"/>
    <property type="match status" value="1"/>
</dbReference>
<protein>
    <recommendedName>
        <fullName evidence="1">tRNA-cytidine(32) 2-sulfurtransferase</fullName>
        <ecNumber evidence="1">2.8.1.-</ecNumber>
    </recommendedName>
    <alternativeName>
        <fullName evidence="1">Two-thiocytidine biosynthesis protein A</fullName>
    </alternativeName>
    <alternativeName>
        <fullName evidence="1">tRNA 2-thiocytidine biosynthesis protein TtcA</fullName>
    </alternativeName>
</protein>
<keyword id="KW-0004">4Fe-4S</keyword>
<keyword id="KW-0067">ATP-binding</keyword>
<keyword id="KW-0963">Cytoplasm</keyword>
<keyword id="KW-0408">Iron</keyword>
<keyword id="KW-0411">Iron-sulfur</keyword>
<keyword id="KW-0460">Magnesium</keyword>
<keyword id="KW-0479">Metal-binding</keyword>
<keyword id="KW-0547">Nucleotide-binding</keyword>
<keyword id="KW-1185">Reference proteome</keyword>
<keyword id="KW-0694">RNA-binding</keyword>
<keyword id="KW-0808">Transferase</keyword>
<keyword id="KW-0819">tRNA processing</keyword>
<keyword id="KW-0820">tRNA-binding</keyword>
<evidence type="ECO:0000255" key="1">
    <source>
        <dbReference type="HAMAP-Rule" id="MF_01850"/>
    </source>
</evidence>
<gene>
    <name evidence="1" type="primary">ttcA</name>
    <name type="ordered locus">H16_A0260</name>
</gene>
<sequence>MSHSNNFYRLETRLQSQTGKAIGDFGMIEDGDTVLVCMSGGKDSYTMLSVLMALQKRAPIKFKLIAMNLDQKQPGFPEHILPEYLKSVGVEYVIVEADTYSIVKEKVPEGKTTCSLCSRLRRGVIYRTAKELGANKIALGHHRDDIVQTFFLNMFFGGKMKAMPPKLSTDDGQHIVIRPLAYCSEKDIASYARAMEFPIIPCNLCGSQENLQRKKVSEMLQDWERQNPGRIDNIFSALRNVVPSHLADTDLFPFTGLATGLAKVDEASLFGETTFQQQPLMFAGNVEENRMEFVRFERPPAAAAAPAAEQAGTQ</sequence>
<accession>Q0KF09</accession>
<organism>
    <name type="scientific">Cupriavidus necator (strain ATCC 17699 / DSM 428 / KCTC 22496 / NCIMB 10442 / H16 / Stanier 337)</name>
    <name type="common">Ralstonia eutropha</name>
    <dbReference type="NCBI Taxonomy" id="381666"/>
    <lineage>
        <taxon>Bacteria</taxon>
        <taxon>Pseudomonadati</taxon>
        <taxon>Pseudomonadota</taxon>
        <taxon>Betaproteobacteria</taxon>
        <taxon>Burkholderiales</taxon>
        <taxon>Burkholderiaceae</taxon>
        <taxon>Cupriavidus</taxon>
    </lineage>
</organism>
<proteinExistence type="inferred from homology"/>
<name>TTCA_CUPNH</name>
<feature type="chain" id="PRO_0000348810" description="tRNA-cytidine(32) 2-sulfurtransferase">
    <location>
        <begin position="1"/>
        <end position="314"/>
    </location>
</feature>
<feature type="short sequence motif" description="PP-loop motif" evidence="1">
    <location>
        <begin position="39"/>
        <end position="44"/>
    </location>
</feature>
<feature type="binding site" evidence="1">
    <location>
        <position position="114"/>
    </location>
    <ligand>
        <name>[4Fe-4S] cluster</name>
        <dbReference type="ChEBI" id="CHEBI:49883"/>
    </ligand>
</feature>
<feature type="binding site" evidence="1">
    <location>
        <position position="117"/>
    </location>
    <ligand>
        <name>[4Fe-4S] cluster</name>
        <dbReference type="ChEBI" id="CHEBI:49883"/>
    </ligand>
</feature>
<feature type="binding site" evidence="1">
    <location>
        <position position="205"/>
    </location>
    <ligand>
        <name>[4Fe-4S] cluster</name>
        <dbReference type="ChEBI" id="CHEBI:49883"/>
    </ligand>
</feature>